<name>ST20_HUMAN</name>
<evidence type="ECO:0000269" key="1">
    <source>
    </source>
</evidence>
<keyword id="KW-1185">Reference proteome</keyword>
<keyword id="KW-0043">Tumor suppressor</keyword>
<reference key="1">
    <citation type="journal article" date="2002" name="Int. J. Cancer">
        <title>Candidate tumor suppressor, HCCS-1, is downregulated in human cancers and induces apoptosis in cervical cancer.</title>
        <authorList>
            <person name="Kim T.E."/>
            <person name="Kim Y.W."/>
            <person name="Hwang S.Y."/>
            <person name="Shin S.M."/>
            <person name="Shin J.W."/>
            <person name="Lee Y.H."/>
            <person name="Shin S.Y."/>
            <person name="Han K.T."/>
            <person name="Lee J.M."/>
            <person name="Namkoong S.E."/>
            <person name="Kim J.W."/>
        </authorList>
    </citation>
    <scope>NUCLEOTIDE SEQUENCE [MRNA]</scope>
    <scope>VARIANT LEU-57</scope>
    <scope>FUNCTION</scope>
    <scope>TISSUE SPECIFICITY</scope>
</reference>
<reference key="2">
    <citation type="journal article" date="2006" name="Nature">
        <title>Analysis of the DNA sequence and duplication history of human chromosome 15.</title>
        <authorList>
            <person name="Zody M.C."/>
            <person name="Garber M."/>
            <person name="Sharpe T."/>
            <person name="Young S.K."/>
            <person name="Rowen L."/>
            <person name="O'Neill K."/>
            <person name="Whittaker C.A."/>
            <person name="Kamal M."/>
            <person name="Chang J.L."/>
            <person name="Cuomo C.A."/>
            <person name="Dewar K."/>
            <person name="FitzGerald M.G."/>
            <person name="Kodira C.D."/>
            <person name="Madan A."/>
            <person name="Qin S."/>
            <person name="Yang X."/>
            <person name="Abbasi N."/>
            <person name="Abouelleil A."/>
            <person name="Arachchi H.M."/>
            <person name="Baradarani L."/>
            <person name="Birditt B."/>
            <person name="Bloom S."/>
            <person name="Bloom T."/>
            <person name="Borowsky M.L."/>
            <person name="Burke J."/>
            <person name="Butler J."/>
            <person name="Cook A."/>
            <person name="DeArellano K."/>
            <person name="DeCaprio D."/>
            <person name="Dorris L. III"/>
            <person name="Dors M."/>
            <person name="Eichler E.E."/>
            <person name="Engels R."/>
            <person name="Fahey J."/>
            <person name="Fleetwood P."/>
            <person name="Friedman C."/>
            <person name="Gearin G."/>
            <person name="Hall J.L."/>
            <person name="Hensley G."/>
            <person name="Johnson E."/>
            <person name="Jones C."/>
            <person name="Kamat A."/>
            <person name="Kaur A."/>
            <person name="Locke D.P."/>
            <person name="Madan A."/>
            <person name="Munson G."/>
            <person name="Jaffe D.B."/>
            <person name="Lui A."/>
            <person name="Macdonald P."/>
            <person name="Mauceli E."/>
            <person name="Naylor J.W."/>
            <person name="Nesbitt R."/>
            <person name="Nicol R."/>
            <person name="O'Leary S.B."/>
            <person name="Ratcliffe A."/>
            <person name="Rounsley S."/>
            <person name="She X."/>
            <person name="Sneddon K.M.B."/>
            <person name="Stewart S."/>
            <person name="Sougnez C."/>
            <person name="Stone S.M."/>
            <person name="Topham K."/>
            <person name="Vincent D."/>
            <person name="Wang S."/>
            <person name="Zimmer A.R."/>
            <person name="Birren B.W."/>
            <person name="Hood L."/>
            <person name="Lander E.S."/>
            <person name="Nusbaum C."/>
        </authorList>
    </citation>
    <scope>NUCLEOTIDE SEQUENCE [LARGE SCALE GENOMIC DNA]</scope>
</reference>
<comment type="function">
    <text evidence="1">May act as a tumor suppressor. Promotes apoptosis of cancer cells.</text>
</comment>
<comment type="tissue specificity">
    <text evidence="1">Expressed in leukocytes, lung, spleen, liver, heart, kidney, muscle and uterine cervix. Down-regulated in cervical cancer.</text>
</comment>
<organism>
    <name type="scientific">Homo sapiens</name>
    <name type="common">Human</name>
    <dbReference type="NCBI Taxonomy" id="9606"/>
    <lineage>
        <taxon>Eukaryota</taxon>
        <taxon>Metazoa</taxon>
        <taxon>Chordata</taxon>
        <taxon>Craniata</taxon>
        <taxon>Vertebrata</taxon>
        <taxon>Euteleostomi</taxon>
        <taxon>Mammalia</taxon>
        <taxon>Eutheria</taxon>
        <taxon>Euarchontoglires</taxon>
        <taxon>Primates</taxon>
        <taxon>Haplorrhini</taxon>
        <taxon>Catarrhini</taxon>
        <taxon>Hominidae</taxon>
        <taxon>Homo</taxon>
    </lineage>
</organism>
<sequence>MARSRLTATSVSQVQENGFVKKLEPKSGWMTFLEVTGKICEMLFCPEAILLTRKDTPYCETGLIFLTLTKTIANTYFYF</sequence>
<proteinExistence type="evidence at transcript level"/>
<feature type="chain" id="PRO_0000341245" description="Suppressor of tumorigenicity 20 protein">
    <location>
        <begin position="1"/>
        <end position="79"/>
    </location>
</feature>
<feature type="sequence variant" id="VAR_044034" description="In dbSNP:rs7257." evidence="1">
    <original>P</original>
    <variation>L</variation>
    <location>
        <position position="57"/>
    </location>
</feature>
<gene>
    <name type="primary">ST20</name>
    <name type="synonym">HCCS1</name>
</gene>
<dbReference type="EMBL" id="AF249277">
    <property type="protein sequence ID" value="AAG17280.1"/>
    <property type="molecule type" value="mRNA"/>
</dbReference>
<dbReference type="EMBL" id="AC015871">
    <property type="status" value="NOT_ANNOTATED_CDS"/>
    <property type="molecule type" value="Genomic_DNA"/>
</dbReference>
<dbReference type="RefSeq" id="NP_001094349.1">
    <property type="nucleotide sequence ID" value="NM_001100879.1"/>
</dbReference>
<dbReference type="RefSeq" id="NP_001094350.1">
    <property type="nucleotide sequence ID" value="NM_001100880.2"/>
</dbReference>
<dbReference type="RefSeq" id="NP_001186686.1">
    <property type="nucleotide sequence ID" value="NM_001199757.1"/>
</dbReference>
<dbReference type="BioGRID" id="134590">
    <property type="interactions" value="3"/>
</dbReference>
<dbReference type="STRING" id="9606.ENSP00000453502"/>
<dbReference type="iPTMnet" id="Q9HBF5"/>
<dbReference type="PhosphoSitePlus" id="Q9HBF5"/>
<dbReference type="BioMuta" id="ST20"/>
<dbReference type="MassIVE" id="Q9HBF5"/>
<dbReference type="PaxDb" id="9606-ENSP00000453502"/>
<dbReference type="PeptideAtlas" id="Q9HBF5"/>
<dbReference type="UCSC" id="uc002bez.5">
    <property type="organism name" value="human"/>
</dbReference>
<dbReference type="AGR" id="HGNC:33520"/>
<dbReference type="GeneCards" id="ST20"/>
<dbReference type="HGNC" id="HGNC:33520">
    <property type="gene designation" value="ST20"/>
</dbReference>
<dbReference type="neXtProt" id="NX_Q9HBF5"/>
<dbReference type="PharmGKB" id="PA162404859"/>
<dbReference type="VEuPathDB" id="HostDB:ENSG00000180953"/>
<dbReference type="eggNOG" id="KOG4728">
    <property type="taxonomic scope" value="Eukaryota"/>
</dbReference>
<dbReference type="HOGENOM" id="CLU_2605354_0_0_1"/>
<dbReference type="InParanoid" id="Q9HBF5"/>
<dbReference type="OMA" id="CQVQENG"/>
<dbReference type="PAN-GO" id="Q9HBF5">
    <property type="GO annotations" value="0 GO annotations based on evolutionary models"/>
</dbReference>
<dbReference type="PhylomeDB" id="Q9HBF5"/>
<dbReference type="TreeFam" id="TF341118"/>
<dbReference type="PathwayCommons" id="Q9HBF5"/>
<dbReference type="SignaLink" id="Q9HBF5"/>
<dbReference type="BioGRID-ORCS" id="400410">
    <property type="hits" value="154 hits in 1045 CRISPR screens"/>
</dbReference>
<dbReference type="GenomeRNAi" id="400410"/>
<dbReference type="Pharos" id="Q9HBF5">
    <property type="development level" value="Tbio"/>
</dbReference>
<dbReference type="PRO" id="PR:Q9HBF5"/>
<dbReference type="Proteomes" id="UP000005640">
    <property type="component" value="Chromosome 15"/>
</dbReference>
<dbReference type="RNAct" id="Q9HBF5">
    <property type="molecule type" value="protein"/>
</dbReference>
<dbReference type="Bgee" id="ENSG00000180953">
    <property type="expression patterns" value="Expressed in blood and 146 other cell types or tissues"/>
</dbReference>
<dbReference type="GO" id="GO:0140608">
    <property type="term" value="F:cysteine-type endopeptidase activator activity"/>
    <property type="evidence" value="ECO:0000314"/>
    <property type="project" value="UniProtKB"/>
</dbReference>
<dbReference type="GO" id="GO:0097190">
    <property type="term" value="P:apoptotic signaling pathway"/>
    <property type="evidence" value="ECO:0000314"/>
    <property type="project" value="UniProtKB"/>
</dbReference>
<dbReference type="GO" id="GO:0071494">
    <property type="term" value="P:cellular response to UV-C"/>
    <property type="evidence" value="ECO:0000315"/>
    <property type="project" value="UniProtKB"/>
</dbReference>
<accession>Q9HBF5</accession>
<protein>
    <recommendedName>
        <fullName>Suppressor of tumorigenicity 20 protein</fullName>
    </recommendedName>
    <alternativeName>
        <fullName>Human cervical cancer suppressor gene 1 protein</fullName>
        <shortName>HCCS-1</shortName>
    </alternativeName>
</protein>